<name>BIPC_BURMA</name>
<keyword id="KW-1185">Reference proteome</keyword>
<keyword id="KW-0964">Secreted</keyword>
<keyword id="KW-0843">Virulence</keyword>
<comment type="subcellular location">
    <subcellularLocation>
        <location evidence="1">Secreted</location>
    </subcellularLocation>
    <text evidence="1">Secreted via the bsa type III secretion system.</text>
</comment>
<comment type="similarity">
    <text evidence="3">Belongs to the SctB/SipC family.</text>
</comment>
<feature type="chain" id="PRO_0000343997" description="Effector protein BipC">
    <location>
        <begin position="1"/>
        <end position="419"/>
    </location>
</feature>
<feature type="region of interest" description="Disordered" evidence="2">
    <location>
        <begin position="62"/>
        <end position="91"/>
    </location>
</feature>
<feature type="region of interest" description="Disordered" evidence="2">
    <location>
        <begin position="338"/>
        <end position="402"/>
    </location>
</feature>
<feature type="compositionally biased region" description="Basic and acidic residues" evidence="2">
    <location>
        <begin position="71"/>
        <end position="91"/>
    </location>
</feature>
<feature type="compositionally biased region" description="Basic and acidic residues" evidence="2">
    <location>
        <begin position="380"/>
        <end position="392"/>
    </location>
</feature>
<sequence length="419" mass="44323">MSIGVQSSGINISHAELSRLVDAGKSEQGDKAVRDDGRALARADAALAAVVGERVAARRDAVAGSGAQRVELARPKPDAQTRATDRRTVSGLEREHKRLAASQTPRVTGMHDALVQRHVSLDGAKAAHGEGVKRAAGDAPRAAADAPQRFAFADDKAFDAMLALGAAMQKNVQSDLAMQGKLTMLAHDAMMSAAAQDRSIGAAQMTAAIAGGALQATTSLGGAMQQMKSLSTKSMSIEKELKPQAELKQFHAEQALELRGINKPVLSNDEVSHVKIKRDTGETVRHEIDHGGERMSDEHASVLAQEAPARQHRIDMHGMRHEENLVKAGRQQMKGDLLQSGGQIGKNQIDGASAQQQGADRAEQKEDENAQQTAMAAASTRDEAAHRSREAAQKAIDAAKSQVANDNAVAAQVAGNLRT</sequence>
<organism>
    <name type="scientific">Burkholderia mallei (strain ATCC 23344)</name>
    <dbReference type="NCBI Taxonomy" id="243160"/>
    <lineage>
        <taxon>Bacteria</taxon>
        <taxon>Pseudomonadati</taxon>
        <taxon>Pseudomonadota</taxon>
        <taxon>Betaproteobacteria</taxon>
        <taxon>Burkholderiales</taxon>
        <taxon>Burkholderiaceae</taxon>
        <taxon>Burkholderia</taxon>
        <taxon>pseudomallei group</taxon>
    </lineage>
</organism>
<reference key="1">
    <citation type="journal article" date="2004" name="Proc. Natl. Acad. Sci. U.S.A.">
        <title>Structural flexibility in the Burkholderia mallei genome.</title>
        <authorList>
            <person name="Nierman W.C."/>
            <person name="DeShazer D."/>
            <person name="Kim H.S."/>
            <person name="Tettelin H."/>
            <person name="Nelson K.E."/>
            <person name="Feldblyum T.V."/>
            <person name="Ulrich R.L."/>
            <person name="Ronning C.M."/>
            <person name="Brinkac L.M."/>
            <person name="Daugherty S.C."/>
            <person name="Davidsen T.D."/>
            <person name="DeBoy R.T."/>
            <person name="Dimitrov G."/>
            <person name="Dodson R.J."/>
            <person name="Durkin A.S."/>
            <person name="Gwinn M.L."/>
            <person name="Haft D.H."/>
            <person name="Khouri H.M."/>
            <person name="Kolonay J.F."/>
            <person name="Madupu R."/>
            <person name="Mohammoud Y."/>
            <person name="Nelson W.C."/>
            <person name="Radune D."/>
            <person name="Romero C.M."/>
            <person name="Sarria S."/>
            <person name="Selengut J."/>
            <person name="Shamblin C."/>
            <person name="Sullivan S.A."/>
            <person name="White O."/>
            <person name="Yu Y."/>
            <person name="Zafar N."/>
            <person name="Zhou L."/>
            <person name="Fraser C.M."/>
        </authorList>
    </citation>
    <scope>NUCLEOTIDE SEQUENCE [LARGE SCALE GENOMIC DNA]</scope>
    <source>
        <strain>ATCC 23344</strain>
    </source>
</reference>
<gene>
    <name type="primary">bipC</name>
    <name type="ordered locus">BMAA1530</name>
</gene>
<evidence type="ECO:0000250" key="1"/>
<evidence type="ECO:0000256" key="2">
    <source>
        <dbReference type="SAM" id="MobiDB-lite"/>
    </source>
</evidence>
<evidence type="ECO:0000305" key="3"/>
<proteinExistence type="inferred from homology"/>
<dbReference type="EMBL" id="CP000011">
    <property type="protein sequence ID" value="AAU46008.1"/>
    <property type="molecule type" value="Genomic_DNA"/>
</dbReference>
<dbReference type="RefSeq" id="WP_004203135.1">
    <property type="nucleotide sequence ID" value="NC_006349.2"/>
</dbReference>
<dbReference type="RefSeq" id="YP_106120.1">
    <property type="nucleotide sequence ID" value="NC_006349.2"/>
</dbReference>
<dbReference type="GeneID" id="92975830"/>
<dbReference type="KEGG" id="bma:BMAA1530"/>
<dbReference type="PATRIC" id="fig|243160.12.peg.5106"/>
<dbReference type="HOGENOM" id="CLU_661703_0_0_4"/>
<dbReference type="Proteomes" id="UP000006693">
    <property type="component" value="Chromosome 2"/>
</dbReference>
<dbReference type="GO" id="GO:0005576">
    <property type="term" value="C:extracellular region"/>
    <property type="evidence" value="ECO:0007669"/>
    <property type="project" value="UniProtKB-SubCell"/>
</dbReference>
<dbReference type="InterPro" id="IPR005427">
    <property type="entry name" value="BipC/SctB"/>
</dbReference>
<dbReference type="NCBIfam" id="TIGR02101">
    <property type="entry name" value="IpaC_SipC"/>
    <property type="match status" value="1"/>
</dbReference>
<dbReference type="Pfam" id="PF09599">
    <property type="entry name" value="IpaC_SipC"/>
    <property type="match status" value="1"/>
</dbReference>
<dbReference type="PRINTS" id="PR01608">
    <property type="entry name" value="BACINVASINC"/>
</dbReference>
<protein>
    <recommendedName>
        <fullName>Effector protein BipC</fullName>
    </recommendedName>
</protein>
<accession>Q62B08</accession>